<gene>
    <name evidence="1" type="primary">glmU</name>
    <name type="ordered locus">ACL_1036</name>
</gene>
<protein>
    <recommendedName>
        <fullName evidence="1">Bifunctional protein GlmU</fullName>
    </recommendedName>
    <domain>
        <recommendedName>
            <fullName evidence="1">UDP-N-acetylglucosamine pyrophosphorylase</fullName>
            <ecNumber evidence="1">2.7.7.23</ecNumber>
        </recommendedName>
        <alternativeName>
            <fullName evidence="1">N-acetylglucosamine-1-phosphate uridyltransferase</fullName>
        </alternativeName>
    </domain>
    <domain>
        <recommendedName>
            <fullName evidence="1">Glucosamine-1-phosphate N-acetyltransferase</fullName>
            <ecNumber evidence="1">2.3.1.157</ecNumber>
        </recommendedName>
    </domain>
</protein>
<sequence>MKNYALVLAAGKGTRMKSDIPKVAFPILRKPMIEYIVENIEKSSVEEIYLVLGYKREVVEGIVKDRAKYVYQEEQLGTGHAAMMAAPVLSKLDGNTFIMPGDVPLIWYKSIDRMFAVHEDNGNDFTIVTAHYEDPEGYGRIVRNEQGVIQRIVEEKDANDFEKEIKEVNTGIYIVNNKKFFSLLKNLNNNNAKGEYYITDMVELMKKDYKIGSYMIKNNSLAMGVNDLYAISKAEKYLREYINKDHMLNGVSMINPETITIGHNVIIEPGVTINPNTTITGDTVIKAGAIVGPNTEIHNSRIDSHVVVRHSLVYDSIVREGTTVGPFAHLRDHADIGTHNRIGNFVEVKKSSTGHNTKASHLAYIGDSVVGESVNFGCGSVTVNYDGKLKHKTEIGDNVFIGCNTNLIAPIKIGDNVFIAAGSTVTKDIPDNGFAIARSRQVTKEDYSKYLISPKPKKEE</sequence>
<proteinExistence type="inferred from homology"/>
<keyword id="KW-0012">Acyltransferase</keyword>
<keyword id="KW-0133">Cell shape</keyword>
<keyword id="KW-0961">Cell wall biogenesis/degradation</keyword>
<keyword id="KW-0963">Cytoplasm</keyword>
<keyword id="KW-0460">Magnesium</keyword>
<keyword id="KW-0479">Metal-binding</keyword>
<keyword id="KW-0511">Multifunctional enzyme</keyword>
<keyword id="KW-0548">Nucleotidyltransferase</keyword>
<keyword id="KW-0573">Peptidoglycan synthesis</keyword>
<keyword id="KW-1185">Reference proteome</keyword>
<keyword id="KW-0677">Repeat</keyword>
<keyword id="KW-0808">Transferase</keyword>
<evidence type="ECO:0000255" key="1">
    <source>
        <dbReference type="HAMAP-Rule" id="MF_01631"/>
    </source>
</evidence>
<accession>A9NH16</accession>
<feature type="chain" id="PRO_1000088122" description="Bifunctional protein GlmU">
    <location>
        <begin position="1"/>
        <end position="460"/>
    </location>
</feature>
<feature type="region of interest" description="Pyrophosphorylase" evidence="1">
    <location>
        <begin position="1"/>
        <end position="228"/>
    </location>
</feature>
<feature type="region of interest" description="Linker" evidence="1">
    <location>
        <begin position="229"/>
        <end position="249"/>
    </location>
</feature>
<feature type="region of interest" description="N-acetyltransferase" evidence="1">
    <location>
        <begin position="250"/>
        <end position="460"/>
    </location>
</feature>
<feature type="active site" description="Proton acceptor" evidence="1">
    <location>
        <position position="361"/>
    </location>
</feature>
<feature type="binding site" evidence="1">
    <location>
        <begin position="8"/>
        <end position="11"/>
    </location>
    <ligand>
        <name>UDP-N-acetyl-alpha-D-glucosamine</name>
        <dbReference type="ChEBI" id="CHEBI:57705"/>
    </ligand>
</feature>
<feature type="binding site" evidence="1">
    <location>
        <position position="22"/>
    </location>
    <ligand>
        <name>UDP-N-acetyl-alpha-D-glucosamine</name>
        <dbReference type="ChEBI" id="CHEBI:57705"/>
    </ligand>
</feature>
<feature type="binding site" evidence="1">
    <location>
        <position position="72"/>
    </location>
    <ligand>
        <name>UDP-N-acetyl-alpha-D-glucosamine</name>
        <dbReference type="ChEBI" id="CHEBI:57705"/>
    </ligand>
</feature>
<feature type="binding site" evidence="1">
    <location>
        <begin position="77"/>
        <end position="78"/>
    </location>
    <ligand>
        <name>UDP-N-acetyl-alpha-D-glucosamine</name>
        <dbReference type="ChEBI" id="CHEBI:57705"/>
    </ligand>
</feature>
<feature type="binding site" evidence="1">
    <location>
        <position position="102"/>
    </location>
    <ligand>
        <name>Mg(2+)</name>
        <dbReference type="ChEBI" id="CHEBI:18420"/>
    </ligand>
</feature>
<feature type="binding site" evidence="1">
    <location>
        <position position="139"/>
    </location>
    <ligand>
        <name>UDP-N-acetyl-alpha-D-glucosamine</name>
        <dbReference type="ChEBI" id="CHEBI:57705"/>
    </ligand>
</feature>
<feature type="binding site" evidence="1">
    <location>
        <position position="154"/>
    </location>
    <ligand>
        <name>UDP-N-acetyl-alpha-D-glucosamine</name>
        <dbReference type="ChEBI" id="CHEBI:57705"/>
    </ligand>
</feature>
<feature type="binding site" evidence="1">
    <location>
        <position position="169"/>
    </location>
    <ligand>
        <name>UDP-N-acetyl-alpha-D-glucosamine</name>
        <dbReference type="ChEBI" id="CHEBI:57705"/>
    </ligand>
</feature>
<feature type="binding site" evidence="1">
    <location>
        <position position="226"/>
    </location>
    <ligand>
        <name>Mg(2+)</name>
        <dbReference type="ChEBI" id="CHEBI:18420"/>
    </ligand>
</feature>
<feature type="binding site" evidence="1">
    <location>
        <position position="226"/>
    </location>
    <ligand>
        <name>UDP-N-acetyl-alpha-D-glucosamine</name>
        <dbReference type="ChEBI" id="CHEBI:57705"/>
    </ligand>
</feature>
<feature type="binding site" evidence="1">
    <location>
        <position position="331"/>
    </location>
    <ligand>
        <name>UDP-N-acetyl-alpha-D-glucosamine</name>
        <dbReference type="ChEBI" id="CHEBI:57705"/>
    </ligand>
</feature>
<feature type="binding site" evidence="1">
    <location>
        <position position="349"/>
    </location>
    <ligand>
        <name>UDP-N-acetyl-alpha-D-glucosamine</name>
        <dbReference type="ChEBI" id="CHEBI:57705"/>
    </ligand>
</feature>
<feature type="binding site" evidence="1">
    <location>
        <position position="364"/>
    </location>
    <ligand>
        <name>UDP-N-acetyl-alpha-D-glucosamine</name>
        <dbReference type="ChEBI" id="CHEBI:57705"/>
    </ligand>
</feature>
<feature type="binding site" evidence="1">
    <location>
        <position position="375"/>
    </location>
    <ligand>
        <name>UDP-N-acetyl-alpha-D-glucosamine</name>
        <dbReference type="ChEBI" id="CHEBI:57705"/>
    </ligand>
</feature>
<feature type="binding site" evidence="1">
    <location>
        <begin position="384"/>
        <end position="385"/>
    </location>
    <ligand>
        <name>acetyl-CoA</name>
        <dbReference type="ChEBI" id="CHEBI:57288"/>
    </ligand>
</feature>
<feature type="binding site" evidence="1">
    <location>
        <position position="421"/>
    </location>
    <ligand>
        <name>acetyl-CoA</name>
        <dbReference type="ChEBI" id="CHEBI:57288"/>
    </ligand>
</feature>
<feature type="binding site" evidence="1">
    <location>
        <position position="438"/>
    </location>
    <ligand>
        <name>acetyl-CoA</name>
        <dbReference type="ChEBI" id="CHEBI:57288"/>
    </ligand>
</feature>
<reference key="1">
    <citation type="journal article" date="2011" name="J. Bacteriol.">
        <title>Complete genome and proteome of Acholeplasma laidlawii.</title>
        <authorList>
            <person name="Lazarev V.N."/>
            <person name="Levitskii S.A."/>
            <person name="Basovskii Y.I."/>
            <person name="Chukin M.M."/>
            <person name="Akopian T.A."/>
            <person name="Vereshchagin V.V."/>
            <person name="Kostrjukova E.S."/>
            <person name="Kovaleva G.Y."/>
            <person name="Kazanov M.D."/>
            <person name="Malko D.B."/>
            <person name="Vitreschak A.G."/>
            <person name="Sernova N.V."/>
            <person name="Gelfand M.S."/>
            <person name="Demina I.A."/>
            <person name="Serebryakova M.V."/>
            <person name="Galyamina M.A."/>
            <person name="Vtyurin N.N."/>
            <person name="Rogov S.I."/>
            <person name="Alexeev D.G."/>
            <person name="Ladygina V.G."/>
            <person name="Govorun V.M."/>
        </authorList>
    </citation>
    <scope>NUCLEOTIDE SEQUENCE [LARGE SCALE GENOMIC DNA]</scope>
    <source>
        <strain>PG-8A</strain>
    </source>
</reference>
<dbReference type="EC" id="2.7.7.23" evidence="1"/>
<dbReference type="EC" id="2.3.1.157" evidence="1"/>
<dbReference type="EMBL" id="CP000896">
    <property type="protein sequence ID" value="ABX81646.1"/>
    <property type="molecule type" value="Genomic_DNA"/>
</dbReference>
<dbReference type="RefSeq" id="WP_012242977.1">
    <property type="nucleotide sequence ID" value="NC_010163.1"/>
</dbReference>
<dbReference type="SMR" id="A9NH16"/>
<dbReference type="STRING" id="441768.ACL_1036"/>
<dbReference type="GeneID" id="41339182"/>
<dbReference type="KEGG" id="acl:ACL_1036"/>
<dbReference type="eggNOG" id="COG1207">
    <property type="taxonomic scope" value="Bacteria"/>
</dbReference>
<dbReference type="HOGENOM" id="CLU_029499_15_2_14"/>
<dbReference type="OrthoDB" id="9775031at2"/>
<dbReference type="UniPathway" id="UPA00113">
    <property type="reaction ID" value="UER00532"/>
</dbReference>
<dbReference type="UniPathway" id="UPA00113">
    <property type="reaction ID" value="UER00533"/>
</dbReference>
<dbReference type="UniPathway" id="UPA00973"/>
<dbReference type="Proteomes" id="UP000008558">
    <property type="component" value="Chromosome"/>
</dbReference>
<dbReference type="GO" id="GO:0005737">
    <property type="term" value="C:cytoplasm"/>
    <property type="evidence" value="ECO:0007669"/>
    <property type="project" value="UniProtKB-SubCell"/>
</dbReference>
<dbReference type="GO" id="GO:0016020">
    <property type="term" value="C:membrane"/>
    <property type="evidence" value="ECO:0007669"/>
    <property type="project" value="GOC"/>
</dbReference>
<dbReference type="GO" id="GO:0019134">
    <property type="term" value="F:glucosamine-1-phosphate N-acetyltransferase activity"/>
    <property type="evidence" value="ECO:0007669"/>
    <property type="project" value="UniProtKB-UniRule"/>
</dbReference>
<dbReference type="GO" id="GO:0000287">
    <property type="term" value="F:magnesium ion binding"/>
    <property type="evidence" value="ECO:0007669"/>
    <property type="project" value="UniProtKB-UniRule"/>
</dbReference>
<dbReference type="GO" id="GO:0003977">
    <property type="term" value="F:UDP-N-acetylglucosamine diphosphorylase activity"/>
    <property type="evidence" value="ECO:0007669"/>
    <property type="project" value="UniProtKB-UniRule"/>
</dbReference>
<dbReference type="GO" id="GO:0000902">
    <property type="term" value="P:cell morphogenesis"/>
    <property type="evidence" value="ECO:0007669"/>
    <property type="project" value="UniProtKB-UniRule"/>
</dbReference>
<dbReference type="GO" id="GO:0071555">
    <property type="term" value="P:cell wall organization"/>
    <property type="evidence" value="ECO:0007669"/>
    <property type="project" value="UniProtKB-KW"/>
</dbReference>
<dbReference type="GO" id="GO:0009245">
    <property type="term" value="P:lipid A biosynthetic process"/>
    <property type="evidence" value="ECO:0007669"/>
    <property type="project" value="UniProtKB-UniRule"/>
</dbReference>
<dbReference type="GO" id="GO:0009252">
    <property type="term" value="P:peptidoglycan biosynthetic process"/>
    <property type="evidence" value="ECO:0007669"/>
    <property type="project" value="UniProtKB-UniRule"/>
</dbReference>
<dbReference type="GO" id="GO:0008360">
    <property type="term" value="P:regulation of cell shape"/>
    <property type="evidence" value="ECO:0007669"/>
    <property type="project" value="UniProtKB-KW"/>
</dbReference>
<dbReference type="GO" id="GO:0006048">
    <property type="term" value="P:UDP-N-acetylglucosamine biosynthetic process"/>
    <property type="evidence" value="ECO:0007669"/>
    <property type="project" value="UniProtKB-UniPathway"/>
</dbReference>
<dbReference type="CDD" id="cd02540">
    <property type="entry name" value="GT2_GlmU_N_bac"/>
    <property type="match status" value="1"/>
</dbReference>
<dbReference type="CDD" id="cd03353">
    <property type="entry name" value="LbH_GlmU_C"/>
    <property type="match status" value="1"/>
</dbReference>
<dbReference type="Gene3D" id="2.160.10.10">
    <property type="entry name" value="Hexapeptide repeat proteins"/>
    <property type="match status" value="1"/>
</dbReference>
<dbReference type="Gene3D" id="3.90.550.10">
    <property type="entry name" value="Spore Coat Polysaccharide Biosynthesis Protein SpsA, Chain A"/>
    <property type="match status" value="1"/>
</dbReference>
<dbReference type="HAMAP" id="MF_01631">
    <property type="entry name" value="GlmU"/>
    <property type="match status" value="1"/>
</dbReference>
<dbReference type="InterPro" id="IPR005882">
    <property type="entry name" value="Bifunctional_GlmU"/>
</dbReference>
<dbReference type="InterPro" id="IPR050065">
    <property type="entry name" value="GlmU-like"/>
</dbReference>
<dbReference type="InterPro" id="IPR038009">
    <property type="entry name" value="GlmU_C_LbH"/>
</dbReference>
<dbReference type="InterPro" id="IPR001451">
    <property type="entry name" value="Hexapep"/>
</dbReference>
<dbReference type="InterPro" id="IPR018357">
    <property type="entry name" value="Hexapep_transf_CS"/>
</dbReference>
<dbReference type="InterPro" id="IPR005835">
    <property type="entry name" value="NTP_transferase_dom"/>
</dbReference>
<dbReference type="InterPro" id="IPR029044">
    <property type="entry name" value="Nucleotide-diphossugar_trans"/>
</dbReference>
<dbReference type="InterPro" id="IPR011004">
    <property type="entry name" value="Trimer_LpxA-like_sf"/>
</dbReference>
<dbReference type="NCBIfam" id="TIGR01173">
    <property type="entry name" value="glmU"/>
    <property type="match status" value="1"/>
</dbReference>
<dbReference type="NCBIfam" id="NF010934">
    <property type="entry name" value="PRK14354.1"/>
    <property type="match status" value="1"/>
</dbReference>
<dbReference type="PANTHER" id="PTHR43584:SF3">
    <property type="entry name" value="BIFUNCTIONAL PROTEIN GLMU"/>
    <property type="match status" value="1"/>
</dbReference>
<dbReference type="PANTHER" id="PTHR43584">
    <property type="entry name" value="NUCLEOTIDYL TRANSFERASE"/>
    <property type="match status" value="1"/>
</dbReference>
<dbReference type="Pfam" id="PF00132">
    <property type="entry name" value="Hexapep"/>
    <property type="match status" value="1"/>
</dbReference>
<dbReference type="Pfam" id="PF00483">
    <property type="entry name" value="NTP_transferase"/>
    <property type="match status" value="1"/>
</dbReference>
<dbReference type="SUPFAM" id="SSF53448">
    <property type="entry name" value="Nucleotide-diphospho-sugar transferases"/>
    <property type="match status" value="1"/>
</dbReference>
<dbReference type="SUPFAM" id="SSF51161">
    <property type="entry name" value="Trimeric LpxA-like enzymes"/>
    <property type="match status" value="1"/>
</dbReference>
<dbReference type="PROSITE" id="PS00101">
    <property type="entry name" value="HEXAPEP_TRANSFERASES"/>
    <property type="match status" value="1"/>
</dbReference>
<comment type="function">
    <text evidence="1">Catalyzes the last two sequential reactions in the de novo biosynthetic pathway for UDP-N-acetylglucosamine (UDP-GlcNAc). The C-terminal domain catalyzes the transfer of acetyl group from acetyl coenzyme A to glucosamine-1-phosphate (GlcN-1-P) to produce N-acetylglucosamine-1-phosphate (GlcNAc-1-P), which is converted into UDP-GlcNAc by the transfer of uridine 5-monophosphate (from uridine 5-triphosphate), a reaction catalyzed by the N-terminal domain.</text>
</comment>
<comment type="catalytic activity">
    <reaction evidence="1">
        <text>alpha-D-glucosamine 1-phosphate + acetyl-CoA = N-acetyl-alpha-D-glucosamine 1-phosphate + CoA + H(+)</text>
        <dbReference type="Rhea" id="RHEA:13725"/>
        <dbReference type="ChEBI" id="CHEBI:15378"/>
        <dbReference type="ChEBI" id="CHEBI:57287"/>
        <dbReference type="ChEBI" id="CHEBI:57288"/>
        <dbReference type="ChEBI" id="CHEBI:57776"/>
        <dbReference type="ChEBI" id="CHEBI:58516"/>
        <dbReference type="EC" id="2.3.1.157"/>
    </reaction>
</comment>
<comment type="catalytic activity">
    <reaction evidence="1">
        <text>N-acetyl-alpha-D-glucosamine 1-phosphate + UTP + H(+) = UDP-N-acetyl-alpha-D-glucosamine + diphosphate</text>
        <dbReference type="Rhea" id="RHEA:13509"/>
        <dbReference type="ChEBI" id="CHEBI:15378"/>
        <dbReference type="ChEBI" id="CHEBI:33019"/>
        <dbReference type="ChEBI" id="CHEBI:46398"/>
        <dbReference type="ChEBI" id="CHEBI:57705"/>
        <dbReference type="ChEBI" id="CHEBI:57776"/>
        <dbReference type="EC" id="2.7.7.23"/>
    </reaction>
</comment>
<comment type="cofactor">
    <cofactor evidence="1">
        <name>Mg(2+)</name>
        <dbReference type="ChEBI" id="CHEBI:18420"/>
    </cofactor>
    <text evidence="1">Binds 1 Mg(2+) ion per subunit.</text>
</comment>
<comment type="pathway">
    <text evidence="1">Nucleotide-sugar biosynthesis; UDP-N-acetyl-alpha-D-glucosamine biosynthesis; N-acetyl-alpha-D-glucosamine 1-phosphate from alpha-D-glucosamine 6-phosphate (route II): step 2/2.</text>
</comment>
<comment type="pathway">
    <text evidence="1">Nucleotide-sugar biosynthesis; UDP-N-acetyl-alpha-D-glucosamine biosynthesis; UDP-N-acetyl-alpha-D-glucosamine from N-acetyl-alpha-D-glucosamine 1-phosphate: step 1/1.</text>
</comment>
<comment type="pathway">
    <text evidence="1">Bacterial outer membrane biogenesis; LPS lipid A biosynthesis.</text>
</comment>
<comment type="subunit">
    <text evidence="1">Homotrimer.</text>
</comment>
<comment type="subcellular location">
    <subcellularLocation>
        <location evidence="1">Cytoplasm</location>
    </subcellularLocation>
</comment>
<comment type="similarity">
    <text evidence="1">In the N-terminal section; belongs to the N-acetylglucosamine-1-phosphate uridyltransferase family.</text>
</comment>
<comment type="similarity">
    <text evidence="1">In the C-terminal section; belongs to the transferase hexapeptide repeat family.</text>
</comment>
<name>GLMU_ACHLI</name>
<organism>
    <name type="scientific">Acholeplasma laidlawii (strain PG-8A)</name>
    <dbReference type="NCBI Taxonomy" id="441768"/>
    <lineage>
        <taxon>Bacteria</taxon>
        <taxon>Bacillati</taxon>
        <taxon>Mycoplasmatota</taxon>
        <taxon>Mollicutes</taxon>
        <taxon>Acholeplasmatales</taxon>
        <taxon>Acholeplasmataceae</taxon>
        <taxon>Acholeplasma</taxon>
    </lineage>
</organism>